<reference key="1">
    <citation type="submission" date="2000-09" db="EMBL/GenBank/DDBJ databases">
        <title>Cloning and characterization of baboon AOEB166/PRDX5.</title>
        <authorList>
            <person name="Knoops B."/>
            <person name="Cherif H."/>
        </authorList>
    </citation>
    <scope>NUCLEOTIDE SEQUENCE [MRNA]</scope>
</reference>
<sequence length="215" mass="22166">MGLAGVCVLRRSAGYILGGAAGQSVAATAAARRRSEGGWASGGVRSFSRAAAAMAPIKVGDAIPAVEVFEGEPGNKVNLAELFKGKKGVLFGVPGAFTPGCSKTHLPGFVEQAEALKAKGVQVLACLSVNDAFVTGEWGRAHKVEGKVRLLADPTGAFGKETDLLLDDSLVSIFGNRRLKRFSMVVQDGIVKALNVEPDGTGLTCSLAPSIISQL</sequence>
<gene>
    <name type="primary">PRDX5</name>
</gene>
<keyword id="KW-0007">Acetylation</keyword>
<keyword id="KW-0024">Alternative initiation</keyword>
<keyword id="KW-0049">Antioxidant</keyword>
<keyword id="KW-0963">Cytoplasm</keyword>
<keyword id="KW-1015">Disulfide bond</keyword>
<keyword id="KW-0449">Lipoprotein</keyword>
<keyword id="KW-0496">Mitochondrion</keyword>
<keyword id="KW-0560">Oxidoreductase</keyword>
<keyword id="KW-0564">Palmitate</keyword>
<keyword id="KW-0575">Peroxidase</keyword>
<keyword id="KW-0576">Peroxisome</keyword>
<keyword id="KW-0597">Phosphoprotein</keyword>
<keyword id="KW-0676">Redox-active center</keyword>
<keyword id="KW-0809">Transit peptide</keyword>
<name>PRDX5_PAPHA</name>
<accession>Q9GLW9</accession>
<organism>
    <name type="scientific">Papio hamadryas</name>
    <name type="common">Hamadryas baboon</name>
    <dbReference type="NCBI Taxonomy" id="9557"/>
    <lineage>
        <taxon>Eukaryota</taxon>
        <taxon>Metazoa</taxon>
        <taxon>Chordata</taxon>
        <taxon>Craniata</taxon>
        <taxon>Vertebrata</taxon>
        <taxon>Euteleostomi</taxon>
        <taxon>Mammalia</taxon>
        <taxon>Eutheria</taxon>
        <taxon>Euarchontoglires</taxon>
        <taxon>Primates</taxon>
        <taxon>Haplorrhini</taxon>
        <taxon>Catarrhini</taxon>
        <taxon>Cercopithecidae</taxon>
        <taxon>Cercopithecinae</taxon>
        <taxon>Papio</taxon>
    </lineage>
</organism>
<evidence type="ECO:0000250" key="1">
    <source>
        <dbReference type="UniProtKB" id="P30044"/>
    </source>
</evidence>
<evidence type="ECO:0000250" key="2">
    <source>
        <dbReference type="UniProtKB" id="P99029"/>
    </source>
</evidence>
<evidence type="ECO:0000250" key="3">
    <source>
        <dbReference type="UniProtKB" id="Q9R063"/>
    </source>
</evidence>
<evidence type="ECO:0000255" key="4"/>
<evidence type="ECO:0000255" key="5">
    <source>
        <dbReference type="PROSITE-ProRule" id="PRU00691"/>
    </source>
</evidence>
<evidence type="ECO:0000305" key="6"/>
<dbReference type="EC" id="1.11.1.24" evidence="1"/>
<dbReference type="EMBL" id="AF110734">
    <property type="protein sequence ID" value="AAG13451.2"/>
    <property type="molecule type" value="mRNA"/>
</dbReference>
<dbReference type="SMR" id="Q9GLW9"/>
<dbReference type="GO" id="GO:0005739">
    <property type="term" value="C:mitochondrion"/>
    <property type="evidence" value="ECO:0007669"/>
    <property type="project" value="UniProtKB-SubCell"/>
</dbReference>
<dbReference type="GO" id="GO:0005782">
    <property type="term" value="C:peroxisomal matrix"/>
    <property type="evidence" value="ECO:0007669"/>
    <property type="project" value="UniProtKB-SubCell"/>
</dbReference>
<dbReference type="GO" id="GO:0008379">
    <property type="term" value="F:thioredoxin peroxidase activity"/>
    <property type="evidence" value="ECO:0007669"/>
    <property type="project" value="InterPro"/>
</dbReference>
<dbReference type="GO" id="GO:0045454">
    <property type="term" value="P:cell redox homeostasis"/>
    <property type="evidence" value="ECO:0007669"/>
    <property type="project" value="TreeGrafter"/>
</dbReference>
<dbReference type="GO" id="GO:0034599">
    <property type="term" value="P:cellular response to oxidative stress"/>
    <property type="evidence" value="ECO:0007669"/>
    <property type="project" value="InterPro"/>
</dbReference>
<dbReference type="GO" id="GO:0042744">
    <property type="term" value="P:hydrogen peroxide catabolic process"/>
    <property type="evidence" value="ECO:0007669"/>
    <property type="project" value="TreeGrafter"/>
</dbReference>
<dbReference type="CDD" id="cd03013">
    <property type="entry name" value="PRX5_like"/>
    <property type="match status" value="1"/>
</dbReference>
<dbReference type="FunFam" id="3.40.30.10:FF:000020">
    <property type="entry name" value="Peroxiredoxin"/>
    <property type="match status" value="1"/>
</dbReference>
<dbReference type="Gene3D" id="3.40.30.10">
    <property type="entry name" value="Glutaredoxin"/>
    <property type="match status" value="1"/>
</dbReference>
<dbReference type="InterPro" id="IPR037944">
    <property type="entry name" value="PRX5-like"/>
</dbReference>
<dbReference type="InterPro" id="IPR013740">
    <property type="entry name" value="Redoxin"/>
</dbReference>
<dbReference type="InterPro" id="IPR036249">
    <property type="entry name" value="Thioredoxin-like_sf"/>
</dbReference>
<dbReference type="InterPro" id="IPR013766">
    <property type="entry name" value="Thioredoxin_domain"/>
</dbReference>
<dbReference type="PANTHER" id="PTHR10430">
    <property type="entry name" value="PEROXIREDOXIN"/>
    <property type="match status" value="1"/>
</dbReference>
<dbReference type="PANTHER" id="PTHR10430:SF16">
    <property type="entry name" value="PEROXIREDOXIN-5, MITOCHONDRIAL"/>
    <property type="match status" value="1"/>
</dbReference>
<dbReference type="Pfam" id="PF08534">
    <property type="entry name" value="Redoxin"/>
    <property type="match status" value="1"/>
</dbReference>
<dbReference type="SUPFAM" id="SSF52833">
    <property type="entry name" value="Thioredoxin-like"/>
    <property type="match status" value="1"/>
</dbReference>
<dbReference type="PROSITE" id="PS51352">
    <property type="entry name" value="THIOREDOXIN_2"/>
    <property type="match status" value="1"/>
</dbReference>
<comment type="function">
    <text evidence="1">Thiol-specific peroxidase that catalyzes the reduction of hydrogen peroxide and organic hydroperoxides to water and alcohols, respectively. Plays a role in cell protection against oxidative stress by detoxifying peroxides and as sensor of hydrogen peroxide-mediated signaling events.</text>
</comment>
<comment type="catalytic activity">
    <reaction evidence="1">
        <text>a hydroperoxide + [thioredoxin]-dithiol = an alcohol + [thioredoxin]-disulfide + H2O</text>
        <dbReference type="Rhea" id="RHEA:62620"/>
        <dbReference type="Rhea" id="RHEA-COMP:10698"/>
        <dbReference type="Rhea" id="RHEA-COMP:10700"/>
        <dbReference type="ChEBI" id="CHEBI:15377"/>
        <dbReference type="ChEBI" id="CHEBI:29950"/>
        <dbReference type="ChEBI" id="CHEBI:30879"/>
        <dbReference type="ChEBI" id="CHEBI:35924"/>
        <dbReference type="ChEBI" id="CHEBI:50058"/>
        <dbReference type="EC" id="1.11.1.24"/>
    </reaction>
</comment>
<comment type="subunit">
    <text evidence="1">Monomer.</text>
</comment>
<comment type="subcellular location">
    <molecule>Isoform Mitochondrial</molecule>
    <subcellularLocation>
        <location evidence="1">Mitochondrion</location>
    </subcellularLocation>
</comment>
<comment type="subcellular location">
    <molecule>Isoform Cytoplasmic+peroxisomal</molecule>
    <subcellularLocation>
        <location evidence="1">Cytoplasm</location>
    </subcellularLocation>
    <subcellularLocation>
        <location evidence="1">Peroxisome matrix</location>
    </subcellularLocation>
</comment>
<comment type="alternative products">
    <event type="alternative initiation"/>
    <isoform>
        <id>Q9GLW9-1</id>
        <name>Mitochondrial</name>
        <sequence type="displayed"/>
    </isoform>
    <isoform>
        <id>Q9GLW9-2</id>
        <name>Cytoplasmic+peroxisomal</name>
        <sequence type="described" ref="VSP_018831"/>
    </isoform>
</comment>
<comment type="PTM">
    <text evidence="1">S-palmitoylated. Palmitoylation occurs on the active site, inhibiting its reactivity; therefore PRDX5 palmitoylation status determines its antioxidant capacity.</text>
</comment>
<comment type="PTM">
    <molecule>Isoform Mitochondrial</molecule>
    <text evidence="1">S-palmitoylated. Depalmitoylated by ABHD10.</text>
</comment>
<comment type="miscellaneous">
    <text evidence="1">The active site is a conserved redox-active cysteine residue, the peroxidatic cysteine (C(P)), which makes the nucleophilic attack on the peroxide substrate. The peroxide oxidizes the C(P)-SH to cysteine sulfenic acid (C(P)-SOH), which then reacts with another cysteine residue, the resolving cysteine (C(R)), to form a disulfide bridge. The disulfide is subsequently reduced by an appropriate electron donor to complete the catalytic cycle. In this atypical 2-Cys Prx, C(R) is present in the same subunit to form an intramolecular disulfide. The disulfide is subsequently reduced by thioredoxin.</text>
</comment>
<comment type="similarity">
    <text evidence="6">Belongs to the peroxiredoxin family. Prx5 subfamily.</text>
</comment>
<protein>
    <recommendedName>
        <fullName>Peroxiredoxin-5, mitochondrial</fullName>
        <ecNumber evidence="1">1.11.1.24</ecNumber>
    </recommendedName>
    <alternativeName>
        <fullName>Peroxiredoxin V</fullName>
        <shortName>Prx-V</shortName>
    </alternativeName>
    <alternativeName>
        <fullName>Thioredoxin peroxidase</fullName>
    </alternativeName>
    <alternativeName>
        <fullName evidence="6">Thioredoxin-dependent peroxiredoxin 5</fullName>
    </alternativeName>
</protein>
<proteinExistence type="evidence at transcript level"/>
<feature type="transit peptide" description="Mitochondrion" evidence="4">
    <location>
        <begin position="1"/>
        <end position="53"/>
    </location>
</feature>
<feature type="chain" id="PRO_0000023797" description="Peroxiredoxin-5, mitochondrial">
    <location>
        <begin position="54"/>
        <end position="215"/>
    </location>
</feature>
<feature type="domain" description="Thioredoxin" evidence="5">
    <location>
        <begin position="57"/>
        <end position="215"/>
    </location>
</feature>
<feature type="short sequence motif" description="Microbody targeting signal" evidence="1">
    <location>
        <begin position="213"/>
        <end position="215"/>
    </location>
</feature>
<feature type="active site" description="Cysteine sulfenic acid (-SOH) intermediate" evidence="1">
    <location>
        <position position="101"/>
    </location>
</feature>
<feature type="modified residue" description="N6-acetyllysine" evidence="2">
    <location>
        <position position="76"/>
    </location>
</feature>
<feature type="modified residue" description="N6-acetyllysine; alternate" evidence="1">
    <location>
        <position position="84"/>
    </location>
</feature>
<feature type="modified residue" description="N6-succinyllysine; alternate" evidence="2">
    <location>
        <position position="84"/>
    </location>
</feature>
<feature type="modified residue" description="N6-succinyllysine" evidence="2">
    <location>
        <position position="117"/>
    </location>
</feature>
<feature type="modified residue" description="Phosphoserine" evidence="3">
    <location>
        <position position="172"/>
    </location>
</feature>
<feature type="modified residue" description="Phosphoserine" evidence="2">
    <location>
        <position position="183"/>
    </location>
</feature>
<feature type="lipid moiety-binding region" description="S-palmitoyl cysteine" evidence="1">
    <location>
        <position position="101"/>
    </location>
</feature>
<feature type="disulfide bond" description="Redox-active" evidence="5">
    <location>
        <begin position="101"/>
        <end position="205"/>
    </location>
</feature>
<feature type="splice variant" id="VSP_018831" description="In isoform Cytoplasmic+peroxisomal." evidence="6">
    <location>
        <begin position="1"/>
        <end position="53"/>
    </location>
</feature>